<accession>A6WID6</accession>
<sequence>MIFQRTVQKMVKTTGVGLHSGNKVTLSIMPAPVNSGIVLVRTDLSPAVAIPAKAEQVRETTMCTALVNDEGIRISTIEHLFAALAGLGIDNAVIEVDAPEIPIMDGSASPFVFLLQSAGIKEQAAPKKYLKIKRPVRVEDGDKWAELKPFKGFRVNFKIDFAHPEIARSQQHVVMDFSTSAFVKDISRARTFGFMRDIEYLRANNLALGGSMENAVVLDEYRVLNPDGLRYEDEFVKHKILDAFGDLYVAGHAILGEFTAYKTGHALNNQLVRALLAQQDAWELVSFEKEADVPVSFTVPGGAVFA</sequence>
<dbReference type="EC" id="3.5.1.108" evidence="1"/>
<dbReference type="EMBL" id="CP000753">
    <property type="protein sequence ID" value="ABS06575.1"/>
    <property type="molecule type" value="Genomic_DNA"/>
</dbReference>
<dbReference type="RefSeq" id="WP_011845621.1">
    <property type="nucleotide sequence ID" value="NC_009665.1"/>
</dbReference>
<dbReference type="SMR" id="A6WID6"/>
<dbReference type="GeneID" id="11774539"/>
<dbReference type="KEGG" id="sbm:Shew185_0406"/>
<dbReference type="HOGENOM" id="CLU_046528_1_0_6"/>
<dbReference type="UniPathway" id="UPA00359">
    <property type="reaction ID" value="UER00478"/>
</dbReference>
<dbReference type="GO" id="GO:0016020">
    <property type="term" value="C:membrane"/>
    <property type="evidence" value="ECO:0007669"/>
    <property type="project" value="GOC"/>
</dbReference>
<dbReference type="GO" id="GO:0046872">
    <property type="term" value="F:metal ion binding"/>
    <property type="evidence" value="ECO:0007669"/>
    <property type="project" value="UniProtKB-KW"/>
</dbReference>
<dbReference type="GO" id="GO:0103117">
    <property type="term" value="F:UDP-3-O-acyl-N-acetylglucosamine deacetylase activity"/>
    <property type="evidence" value="ECO:0007669"/>
    <property type="project" value="UniProtKB-UniRule"/>
</dbReference>
<dbReference type="GO" id="GO:0009245">
    <property type="term" value="P:lipid A biosynthetic process"/>
    <property type="evidence" value="ECO:0007669"/>
    <property type="project" value="UniProtKB-UniRule"/>
</dbReference>
<dbReference type="Gene3D" id="3.30.230.20">
    <property type="entry name" value="lpxc deacetylase, domain 1"/>
    <property type="match status" value="1"/>
</dbReference>
<dbReference type="Gene3D" id="3.30.1700.10">
    <property type="entry name" value="lpxc deacetylase, domain 2"/>
    <property type="match status" value="1"/>
</dbReference>
<dbReference type="HAMAP" id="MF_00388">
    <property type="entry name" value="LpxC"/>
    <property type="match status" value="1"/>
</dbReference>
<dbReference type="InterPro" id="IPR020568">
    <property type="entry name" value="Ribosomal_Su5_D2-typ_SF"/>
</dbReference>
<dbReference type="InterPro" id="IPR004463">
    <property type="entry name" value="UDP-acyl_GlcNac_deAcase"/>
</dbReference>
<dbReference type="InterPro" id="IPR011334">
    <property type="entry name" value="UDP-acyl_GlcNac_deAcase_C"/>
</dbReference>
<dbReference type="InterPro" id="IPR015870">
    <property type="entry name" value="UDP-acyl_N-AcGlcN_deAcase_N"/>
</dbReference>
<dbReference type="NCBIfam" id="TIGR00325">
    <property type="entry name" value="lpxC"/>
    <property type="match status" value="1"/>
</dbReference>
<dbReference type="PANTHER" id="PTHR33694">
    <property type="entry name" value="UDP-3-O-ACYL-N-ACETYLGLUCOSAMINE DEACETYLASE 1, MITOCHONDRIAL-RELATED"/>
    <property type="match status" value="1"/>
</dbReference>
<dbReference type="PANTHER" id="PTHR33694:SF1">
    <property type="entry name" value="UDP-3-O-ACYL-N-ACETYLGLUCOSAMINE DEACETYLASE 1, MITOCHONDRIAL-RELATED"/>
    <property type="match status" value="1"/>
</dbReference>
<dbReference type="Pfam" id="PF03331">
    <property type="entry name" value="LpxC"/>
    <property type="match status" value="1"/>
</dbReference>
<dbReference type="SUPFAM" id="SSF54211">
    <property type="entry name" value="Ribosomal protein S5 domain 2-like"/>
    <property type="match status" value="2"/>
</dbReference>
<gene>
    <name evidence="1" type="primary">lpxC</name>
    <name type="ordered locus">Shew185_0406</name>
</gene>
<reference key="1">
    <citation type="submission" date="2007-07" db="EMBL/GenBank/DDBJ databases">
        <title>Complete sequence of chromosome of Shewanella baltica OS185.</title>
        <authorList>
            <consortium name="US DOE Joint Genome Institute"/>
            <person name="Copeland A."/>
            <person name="Lucas S."/>
            <person name="Lapidus A."/>
            <person name="Barry K."/>
            <person name="Glavina del Rio T."/>
            <person name="Dalin E."/>
            <person name="Tice H."/>
            <person name="Pitluck S."/>
            <person name="Sims D."/>
            <person name="Brettin T."/>
            <person name="Bruce D."/>
            <person name="Detter J.C."/>
            <person name="Han C."/>
            <person name="Schmutz J."/>
            <person name="Larimer F."/>
            <person name="Land M."/>
            <person name="Hauser L."/>
            <person name="Kyrpides N."/>
            <person name="Mikhailova N."/>
            <person name="Brettar I."/>
            <person name="Rodrigues J."/>
            <person name="Konstantinidis K."/>
            <person name="Tiedje J."/>
            <person name="Richardson P."/>
        </authorList>
    </citation>
    <scope>NUCLEOTIDE SEQUENCE [LARGE SCALE GENOMIC DNA]</scope>
    <source>
        <strain>OS185</strain>
    </source>
</reference>
<name>LPXC_SHEB8</name>
<keyword id="KW-0378">Hydrolase</keyword>
<keyword id="KW-0441">Lipid A biosynthesis</keyword>
<keyword id="KW-0444">Lipid biosynthesis</keyword>
<keyword id="KW-0443">Lipid metabolism</keyword>
<keyword id="KW-0479">Metal-binding</keyword>
<keyword id="KW-0862">Zinc</keyword>
<feature type="chain" id="PRO_1000013227" description="UDP-3-O-acyl-N-acetylglucosamine deacetylase">
    <location>
        <begin position="1"/>
        <end position="306"/>
    </location>
</feature>
<feature type="active site" description="Proton donor" evidence="1">
    <location>
        <position position="265"/>
    </location>
</feature>
<feature type="binding site" evidence="1">
    <location>
        <position position="79"/>
    </location>
    <ligand>
        <name>Zn(2+)</name>
        <dbReference type="ChEBI" id="CHEBI:29105"/>
    </ligand>
</feature>
<feature type="binding site" evidence="1">
    <location>
        <position position="238"/>
    </location>
    <ligand>
        <name>Zn(2+)</name>
        <dbReference type="ChEBI" id="CHEBI:29105"/>
    </ligand>
</feature>
<feature type="binding site" evidence="1">
    <location>
        <position position="242"/>
    </location>
    <ligand>
        <name>Zn(2+)</name>
        <dbReference type="ChEBI" id="CHEBI:29105"/>
    </ligand>
</feature>
<protein>
    <recommendedName>
        <fullName evidence="1">UDP-3-O-acyl-N-acetylglucosamine deacetylase</fullName>
        <shortName evidence="1">UDP-3-O-acyl-GlcNAc deacetylase</shortName>
        <ecNumber evidence="1">3.5.1.108</ecNumber>
    </recommendedName>
    <alternativeName>
        <fullName evidence="1">UDP-3-O-[R-3-hydroxymyristoyl]-N-acetylglucosamine deacetylase</fullName>
    </alternativeName>
</protein>
<organism>
    <name type="scientific">Shewanella baltica (strain OS185)</name>
    <dbReference type="NCBI Taxonomy" id="402882"/>
    <lineage>
        <taxon>Bacteria</taxon>
        <taxon>Pseudomonadati</taxon>
        <taxon>Pseudomonadota</taxon>
        <taxon>Gammaproteobacteria</taxon>
        <taxon>Alteromonadales</taxon>
        <taxon>Shewanellaceae</taxon>
        <taxon>Shewanella</taxon>
    </lineage>
</organism>
<proteinExistence type="inferred from homology"/>
<evidence type="ECO:0000255" key="1">
    <source>
        <dbReference type="HAMAP-Rule" id="MF_00388"/>
    </source>
</evidence>
<comment type="function">
    <text evidence="1">Catalyzes the hydrolysis of UDP-3-O-myristoyl-N-acetylglucosamine to form UDP-3-O-myristoylglucosamine and acetate, the committed step in lipid A biosynthesis.</text>
</comment>
<comment type="catalytic activity">
    <reaction evidence="1">
        <text>a UDP-3-O-[(3R)-3-hydroxyacyl]-N-acetyl-alpha-D-glucosamine + H2O = a UDP-3-O-[(3R)-3-hydroxyacyl]-alpha-D-glucosamine + acetate</text>
        <dbReference type="Rhea" id="RHEA:67816"/>
        <dbReference type="ChEBI" id="CHEBI:15377"/>
        <dbReference type="ChEBI" id="CHEBI:30089"/>
        <dbReference type="ChEBI" id="CHEBI:137740"/>
        <dbReference type="ChEBI" id="CHEBI:173225"/>
        <dbReference type="EC" id="3.5.1.108"/>
    </reaction>
</comment>
<comment type="cofactor">
    <cofactor evidence="1">
        <name>Zn(2+)</name>
        <dbReference type="ChEBI" id="CHEBI:29105"/>
    </cofactor>
</comment>
<comment type="pathway">
    <text evidence="1">Glycolipid biosynthesis; lipid IV(A) biosynthesis; lipid IV(A) from (3R)-3-hydroxytetradecanoyl-[acyl-carrier-protein] and UDP-N-acetyl-alpha-D-glucosamine: step 2/6.</text>
</comment>
<comment type="similarity">
    <text evidence="1">Belongs to the LpxC family.</text>
</comment>